<accession>O88512</accession>
<accession>Q2YDV3</accession>
<proteinExistence type="evidence at protein level"/>
<evidence type="ECO:0000250" key="1">
    <source>
        <dbReference type="UniProtKB" id="O75843"/>
    </source>
</evidence>
<evidence type="ECO:0000255" key="2">
    <source>
        <dbReference type="PROSITE-ProRule" id="PRU00093"/>
    </source>
</evidence>
<evidence type="ECO:0000305" key="3"/>
<protein>
    <recommendedName>
        <fullName>AP-1 complex subunit gamma-like 2</fullName>
    </recommendedName>
    <alternativeName>
        <fullName>Gamma2-adaptin</fullName>
        <shortName>G2ad</shortName>
    </alternativeName>
</protein>
<sequence>MVVHSLRLQDLIEEIRGAKTQAQEREVIQKECAQIRASFRDGDPLQRHRQLAKLLYVHMLGYPAHFGQMECLKLIASPRFTDKRVGYLGAMLLLDERHDSHLLITNSIKNDLSQGNQPVQGLALCTLSTMGSAEMCRDLAPEVEKLLLQPSPYVRKKAILTAVHMIRKDPELSGIFLPPCTKLLRERHHGIQLGTVTLITELCERNPAALRHFRKVVPQLVQILRTLVTTGYSTEHSISGVSDPFLQVQILRLLRILGRNHEESSETMNDLLAQVATNTDTSRNAGNAVLLETVLTIMAIHSAAGLRVLAVNILGRFLLNNDKNIRYVALTSLLQLVQSDHSAVQRHRSTVVECLQETDASLSRRALELSLALVNSSNVRAMMQELQAFLESCPPDLRADCASGILLAAERFAPSKRWHIDTILHVLTTAGAHVRDDAVANLTQLIGEAEELHTYSVRRLYSALAEDISQQPLVQVAAWCIGEYGDLLLEGNCEETEPFQVEEEDVLALLEKVLQSHMSLPATRGYAITALMKLSTRLRGDNNRIRQVVSIYGSCVDLELQQRAVEYNTLFQKYDHMRAAILEKMPLVERGDPHVKEGGKEKQTEAQPLEVTAPAPTEPQATKLLDLLDLLGDTSEPLSSGHAQHLPPQTPSPGEALIHLLDLPCTPPPPAPIPSVRVFEREGLQLDLSFMRPLETPALLLVTATTTNSSKEDVTHFVCQAAVPKSFQLQLQAPSGNTIPAQGGLPITQVFRILNPNQAPLRLKLRLTYNHSGQPVQEIFEVDNLPVETWQ</sequence>
<dbReference type="EMBL" id="AF068707">
    <property type="protein sequence ID" value="AAC67391.1"/>
    <property type="molecule type" value="mRNA"/>
</dbReference>
<dbReference type="EMBL" id="CH466535">
    <property type="protein sequence ID" value="EDL36306.1"/>
    <property type="molecule type" value="Genomic_DNA"/>
</dbReference>
<dbReference type="EMBL" id="CH466535">
    <property type="protein sequence ID" value="EDL36307.1"/>
    <property type="molecule type" value="Genomic_DNA"/>
</dbReference>
<dbReference type="EMBL" id="BC108374">
    <property type="protein sequence ID" value="AAI08375.1"/>
    <property type="molecule type" value="mRNA"/>
</dbReference>
<dbReference type="CCDS" id="CCDS36929.1"/>
<dbReference type="RefSeq" id="NP_031481.2">
    <property type="nucleotide sequence ID" value="NM_007455.5"/>
</dbReference>
<dbReference type="SMR" id="O88512"/>
<dbReference type="BioGRID" id="198124">
    <property type="interactions" value="2"/>
</dbReference>
<dbReference type="FunCoup" id="O88512">
    <property type="interactions" value="1470"/>
</dbReference>
<dbReference type="STRING" id="10090.ENSMUSP00000043996"/>
<dbReference type="GlyGen" id="O88512">
    <property type="glycosylation" value="1 site"/>
</dbReference>
<dbReference type="iPTMnet" id="O88512"/>
<dbReference type="PhosphoSitePlus" id="O88512"/>
<dbReference type="PaxDb" id="10090-ENSMUSP00000043996"/>
<dbReference type="PeptideAtlas" id="O88512"/>
<dbReference type="ProteomicsDB" id="296053"/>
<dbReference type="Antibodypedia" id="110">
    <property type="antibodies" value="69 antibodies from 16 providers"/>
</dbReference>
<dbReference type="DNASU" id="11766"/>
<dbReference type="Ensembl" id="ENSMUST00000036041.15">
    <property type="protein sequence ID" value="ENSMUSP00000043996.9"/>
    <property type="gene ID" value="ENSMUSG00000040701.18"/>
</dbReference>
<dbReference type="GeneID" id="11766"/>
<dbReference type="KEGG" id="mmu:11766"/>
<dbReference type="UCSC" id="uc007tyd.3">
    <property type="organism name" value="mouse"/>
</dbReference>
<dbReference type="AGR" id="MGI:1328307"/>
<dbReference type="CTD" id="8906"/>
<dbReference type="MGI" id="MGI:1328307">
    <property type="gene designation" value="Ap1g2"/>
</dbReference>
<dbReference type="VEuPathDB" id="HostDB:ENSMUSG00000040701"/>
<dbReference type="eggNOG" id="KOG1062">
    <property type="taxonomic scope" value="Eukaryota"/>
</dbReference>
<dbReference type="GeneTree" id="ENSGT00950000182838"/>
<dbReference type="HOGENOM" id="CLU_003824_0_0_1"/>
<dbReference type="InParanoid" id="O88512"/>
<dbReference type="OMA" id="REPNTKK"/>
<dbReference type="OrthoDB" id="28053at2759"/>
<dbReference type="PhylomeDB" id="O88512"/>
<dbReference type="TreeFam" id="TF300367"/>
<dbReference type="Reactome" id="R-MMU-432720">
    <property type="pathway name" value="Lysosome Vesicle Biogenesis"/>
</dbReference>
<dbReference type="BioGRID-ORCS" id="11766">
    <property type="hits" value="3 hits in 78 CRISPR screens"/>
</dbReference>
<dbReference type="ChiTaRS" id="Ap1g2">
    <property type="organism name" value="mouse"/>
</dbReference>
<dbReference type="PRO" id="PR:O88512"/>
<dbReference type="Proteomes" id="UP000000589">
    <property type="component" value="Chromosome 14"/>
</dbReference>
<dbReference type="RNAct" id="O88512">
    <property type="molecule type" value="protein"/>
</dbReference>
<dbReference type="Bgee" id="ENSMUSG00000040701">
    <property type="expression patterns" value="Expressed in duodenum and 161 other cell types or tissues"/>
</dbReference>
<dbReference type="ExpressionAtlas" id="O88512">
    <property type="expression patterns" value="baseline and differential"/>
</dbReference>
<dbReference type="GO" id="GO:0030121">
    <property type="term" value="C:AP-1 adaptor complex"/>
    <property type="evidence" value="ECO:0007669"/>
    <property type="project" value="InterPro"/>
</dbReference>
<dbReference type="GO" id="GO:0010008">
    <property type="term" value="C:endosome membrane"/>
    <property type="evidence" value="ECO:0007669"/>
    <property type="project" value="UniProtKB-SubCell"/>
</dbReference>
<dbReference type="GO" id="GO:0000139">
    <property type="term" value="C:Golgi membrane"/>
    <property type="evidence" value="ECO:0007669"/>
    <property type="project" value="UniProtKB-SubCell"/>
</dbReference>
<dbReference type="GO" id="GO:0005798">
    <property type="term" value="C:Golgi-associated vesicle"/>
    <property type="evidence" value="ECO:0000250"/>
    <property type="project" value="UniProtKB"/>
</dbReference>
<dbReference type="GO" id="GO:0016020">
    <property type="term" value="C:membrane"/>
    <property type="evidence" value="ECO:0000250"/>
    <property type="project" value="UniProtKB"/>
</dbReference>
<dbReference type="GO" id="GO:0045202">
    <property type="term" value="C:synapse"/>
    <property type="evidence" value="ECO:0000314"/>
    <property type="project" value="SynGO"/>
</dbReference>
<dbReference type="GO" id="GO:0005802">
    <property type="term" value="C:trans-Golgi network"/>
    <property type="evidence" value="ECO:0000304"/>
    <property type="project" value="MGI"/>
</dbReference>
<dbReference type="GO" id="GO:0030133">
    <property type="term" value="C:transport vesicle"/>
    <property type="evidence" value="ECO:0000250"/>
    <property type="project" value="UniProtKB"/>
</dbReference>
<dbReference type="GO" id="GO:0006886">
    <property type="term" value="P:intracellular protein transport"/>
    <property type="evidence" value="ECO:0000304"/>
    <property type="project" value="MGI"/>
</dbReference>
<dbReference type="GO" id="GO:0016192">
    <property type="term" value="P:vesicle-mediated transport"/>
    <property type="evidence" value="ECO:0000304"/>
    <property type="project" value="MGI"/>
</dbReference>
<dbReference type="FunFam" id="1.25.10.10:FF:000030">
    <property type="entry name" value="AP-1 complex subunit gamma"/>
    <property type="match status" value="1"/>
</dbReference>
<dbReference type="Gene3D" id="2.60.40.1230">
    <property type="match status" value="1"/>
</dbReference>
<dbReference type="Gene3D" id="1.25.10.10">
    <property type="entry name" value="Leucine-rich Repeat Variant"/>
    <property type="match status" value="1"/>
</dbReference>
<dbReference type="InterPro" id="IPR050840">
    <property type="entry name" value="Adaptor_Complx_Large_Subunit"/>
</dbReference>
<dbReference type="InterPro" id="IPR017107">
    <property type="entry name" value="AP1_complex_gsu"/>
</dbReference>
<dbReference type="InterPro" id="IPR011989">
    <property type="entry name" value="ARM-like"/>
</dbReference>
<dbReference type="InterPro" id="IPR016024">
    <property type="entry name" value="ARM-type_fold"/>
</dbReference>
<dbReference type="InterPro" id="IPR002553">
    <property type="entry name" value="Clathrin/coatomer_adapt-like_N"/>
</dbReference>
<dbReference type="InterPro" id="IPR008152">
    <property type="entry name" value="Clathrin_a/b/g-adaptin_app_Ig"/>
</dbReference>
<dbReference type="InterPro" id="IPR013041">
    <property type="entry name" value="Clathrin_app_Ig-like_sf"/>
</dbReference>
<dbReference type="InterPro" id="IPR008153">
    <property type="entry name" value="GAE_dom"/>
</dbReference>
<dbReference type="PANTHER" id="PTHR22780">
    <property type="entry name" value="ADAPTIN, ALPHA/GAMMA/EPSILON"/>
    <property type="match status" value="1"/>
</dbReference>
<dbReference type="Pfam" id="PF01602">
    <property type="entry name" value="Adaptin_N"/>
    <property type="match status" value="1"/>
</dbReference>
<dbReference type="Pfam" id="PF02883">
    <property type="entry name" value="Alpha_adaptinC2"/>
    <property type="match status" value="1"/>
</dbReference>
<dbReference type="PIRSF" id="PIRSF037094">
    <property type="entry name" value="AP1_complex_gamma"/>
    <property type="match status" value="1"/>
</dbReference>
<dbReference type="SMART" id="SM00809">
    <property type="entry name" value="Alpha_adaptinC2"/>
    <property type="match status" value="1"/>
</dbReference>
<dbReference type="SUPFAM" id="SSF48371">
    <property type="entry name" value="ARM repeat"/>
    <property type="match status" value="1"/>
</dbReference>
<dbReference type="SUPFAM" id="SSF49348">
    <property type="entry name" value="Clathrin adaptor appendage domain"/>
    <property type="match status" value="1"/>
</dbReference>
<dbReference type="PROSITE" id="PS50180">
    <property type="entry name" value="GAE"/>
    <property type="match status" value="1"/>
</dbReference>
<gene>
    <name type="primary">Ap1g2</name>
</gene>
<feature type="chain" id="PRO_0000193761" description="AP-1 complex subunit gamma-like 2">
    <location>
        <begin position="1"/>
        <end position="791"/>
    </location>
</feature>
<feature type="domain" description="GAE" evidence="2">
    <location>
        <begin position="671"/>
        <end position="786"/>
    </location>
</feature>
<feature type="sequence conflict" description="In Ref. 1; AAC67391." evidence="3" ref="1">
    <original>K</original>
    <variation>E</variation>
    <location>
        <position position="19"/>
    </location>
</feature>
<comment type="function">
    <text evidence="1">May function in protein sorting in late endosomes or multivesucular bodies (MVBs). Involved in MVB-assisted maturation of hepatitis B virus (HBV).</text>
</comment>
<comment type="subunit">
    <text evidence="1">May interact with AP1S1/Sigma1A-adaptin and AP1S2/Sigma1B-adaptin (By similarity). Probably does not interact with APB1 (By similarity). Interacts (via GAE domain) with RABEP1, NECAP1, CLINT1 and AFTPH/aftiphilin (By similarity). Interacts with HBV major surface antigen L. Interacts with HBV core protein C in a ubiquitin-dependent manner. Binds ubiquitin.</text>
</comment>
<comment type="subcellular location">
    <subcellularLocation>
        <location evidence="1">Golgi apparatus membrane</location>
        <topology evidence="1">Peripheral membrane protein</topology>
        <orientation evidence="1">Cytoplasmic side</orientation>
    </subcellularLocation>
    <subcellularLocation>
        <location evidence="1">Cytoplasmic vesicle membrane</location>
        <topology evidence="1">Peripheral membrane protein</topology>
    </subcellularLocation>
    <subcellularLocation>
        <location evidence="1">Endosome membrane</location>
        <topology evidence="1">Peripheral membrane protein</topology>
    </subcellularLocation>
    <text evidence="1">Mainly localized to perinuclear vesicular structures. Colocalizes with HBV major surface antigen L and HBV core protein C in CD63-containing compartments. Colocalizes with HBV major surface antigen L to cis-Golgi-like structures.</text>
</comment>
<comment type="tissue specificity">
    <text>Widely expressed.</text>
</comment>
<comment type="similarity">
    <text evidence="3">Belongs to the adaptor complexes large subunit family.</text>
</comment>
<keyword id="KW-0968">Cytoplasmic vesicle</keyword>
<keyword id="KW-0967">Endosome</keyword>
<keyword id="KW-0333">Golgi apparatus</keyword>
<keyword id="KW-0472">Membrane</keyword>
<keyword id="KW-0653">Protein transport</keyword>
<keyword id="KW-1185">Reference proteome</keyword>
<keyword id="KW-0813">Transport</keyword>
<organism>
    <name type="scientific">Mus musculus</name>
    <name type="common">Mouse</name>
    <dbReference type="NCBI Taxonomy" id="10090"/>
    <lineage>
        <taxon>Eukaryota</taxon>
        <taxon>Metazoa</taxon>
        <taxon>Chordata</taxon>
        <taxon>Craniata</taxon>
        <taxon>Vertebrata</taxon>
        <taxon>Euteleostomi</taxon>
        <taxon>Mammalia</taxon>
        <taxon>Eutheria</taxon>
        <taxon>Euarchontoglires</taxon>
        <taxon>Glires</taxon>
        <taxon>Rodentia</taxon>
        <taxon>Myomorpha</taxon>
        <taxon>Muroidea</taxon>
        <taxon>Muridae</taxon>
        <taxon>Murinae</taxon>
        <taxon>Mus</taxon>
        <taxon>Mus</taxon>
    </lineage>
</organism>
<reference key="1">
    <citation type="journal article" date="1998" name="FEBS Lett.">
        <title>Cloning, expression, and localization of a novel gamma-adaptin-like molecule.</title>
        <authorList>
            <person name="Lewin D.A."/>
            <person name="Sheff D."/>
            <person name="Ooi C.E."/>
            <person name="Whitney J.A."/>
            <person name="Yamamoto E."/>
            <person name="Chicione L.M."/>
            <person name="Webster P."/>
            <person name="Bonifacino J.S."/>
            <person name="Mellman I."/>
        </authorList>
    </citation>
    <scope>NUCLEOTIDE SEQUENCE [MRNA]</scope>
</reference>
<reference key="2">
    <citation type="submission" date="2005-07" db="EMBL/GenBank/DDBJ databases">
        <authorList>
            <person name="Mural R.J."/>
            <person name="Adams M.D."/>
            <person name="Myers E.W."/>
            <person name="Smith H.O."/>
            <person name="Venter J.C."/>
        </authorList>
    </citation>
    <scope>NUCLEOTIDE SEQUENCE [LARGE SCALE GENOMIC DNA]</scope>
</reference>
<reference key="3">
    <citation type="journal article" date="2004" name="Genome Res.">
        <title>The status, quality, and expansion of the NIH full-length cDNA project: the Mammalian Gene Collection (MGC).</title>
        <authorList>
            <consortium name="The MGC Project Team"/>
        </authorList>
    </citation>
    <scope>NUCLEOTIDE SEQUENCE [LARGE SCALE MRNA]</scope>
    <source>
        <strain>NMRI</strain>
        <tissue>Mammary tumor</tissue>
    </source>
</reference>
<reference key="4">
    <citation type="journal article" date="2010" name="Cell">
        <title>A tissue-specific atlas of mouse protein phosphorylation and expression.</title>
        <authorList>
            <person name="Huttlin E.L."/>
            <person name="Jedrychowski M.P."/>
            <person name="Elias J.E."/>
            <person name="Goswami T."/>
            <person name="Rad R."/>
            <person name="Beausoleil S.A."/>
            <person name="Villen J."/>
            <person name="Haas W."/>
            <person name="Sowa M.E."/>
            <person name="Gygi S.P."/>
        </authorList>
    </citation>
    <scope>IDENTIFICATION BY MASS SPECTROMETRY [LARGE SCALE ANALYSIS]</scope>
    <source>
        <tissue>Lung</tissue>
        <tissue>Pancreas</tissue>
        <tissue>Spleen</tissue>
    </source>
</reference>
<name>AP1G2_MOUSE</name>